<reference key="1">
    <citation type="journal article" date="2005" name="Proc. Natl. Acad. Sci. U.S.A.">
        <title>Complete genome sequence of Vibrio fischeri: a symbiotic bacterium with pathogenic congeners.</title>
        <authorList>
            <person name="Ruby E.G."/>
            <person name="Urbanowski M."/>
            <person name="Campbell J."/>
            <person name="Dunn A."/>
            <person name="Faini M."/>
            <person name="Gunsalus R."/>
            <person name="Lostroh P."/>
            <person name="Lupp C."/>
            <person name="McCann J."/>
            <person name="Millikan D."/>
            <person name="Schaefer A."/>
            <person name="Stabb E."/>
            <person name="Stevens A."/>
            <person name="Visick K."/>
            <person name="Whistler C."/>
            <person name="Greenberg E.P."/>
        </authorList>
    </citation>
    <scope>NUCLEOTIDE SEQUENCE [LARGE SCALE GENOMIC DNA]</scope>
    <source>
        <strain>ATCC 700601 / ES114</strain>
    </source>
</reference>
<proteinExistence type="inferred from homology"/>
<dbReference type="EMBL" id="CP000020">
    <property type="protein sequence ID" value="AAW86289.1"/>
    <property type="molecule type" value="Genomic_DNA"/>
</dbReference>
<dbReference type="RefSeq" id="WP_011262326.1">
    <property type="nucleotide sequence ID" value="NC_006840.2"/>
</dbReference>
<dbReference type="RefSeq" id="YP_205177.1">
    <property type="nucleotide sequence ID" value="NC_006840.2"/>
</dbReference>
<dbReference type="SMR" id="Q5E3V7"/>
<dbReference type="STRING" id="312309.VF_1794"/>
<dbReference type="EnsemblBacteria" id="AAW86289">
    <property type="protein sequence ID" value="AAW86289"/>
    <property type="gene ID" value="VF_1794"/>
</dbReference>
<dbReference type="GeneID" id="54164495"/>
<dbReference type="KEGG" id="vfi:VF_1794"/>
<dbReference type="PATRIC" id="fig|312309.11.peg.1821"/>
<dbReference type="eggNOG" id="COG3013">
    <property type="taxonomic scope" value="Bacteria"/>
</dbReference>
<dbReference type="HOGENOM" id="CLU_101021_1_0_6"/>
<dbReference type="OrthoDB" id="5589463at2"/>
<dbReference type="Proteomes" id="UP000000537">
    <property type="component" value="Chromosome I"/>
</dbReference>
<dbReference type="Gene3D" id="1.10.287.680">
    <property type="entry name" value="Helix hairpin bin"/>
    <property type="match status" value="1"/>
</dbReference>
<dbReference type="Gene3D" id="1.10.3190.10">
    <property type="entry name" value="yfbu gene product, domain 2"/>
    <property type="match status" value="1"/>
</dbReference>
<dbReference type="HAMAP" id="MF_00762">
    <property type="entry name" value="UPF0304"/>
    <property type="match status" value="1"/>
</dbReference>
<dbReference type="InterPro" id="IPR005587">
    <property type="entry name" value="UPF0304_YfbU"/>
</dbReference>
<dbReference type="InterPro" id="IPR023146">
    <property type="entry name" value="YfbU_alpha-helical_sf"/>
</dbReference>
<dbReference type="InterPro" id="IPR023145">
    <property type="entry name" value="YfbU_helix-hairpin_sf"/>
</dbReference>
<dbReference type="NCBIfam" id="NF003936">
    <property type="entry name" value="PRK05445.1"/>
    <property type="match status" value="1"/>
</dbReference>
<dbReference type="Pfam" id="PF03887">
    <property type="entry name" value="YfbU"/>
    <property type="match status" value="1"/>
</dbReference>
<dbReference type="PIRSF" id="PIRSF006272">
    <property type="entry name" value="UCP006272"/>
    <property type="match status" value="1"/>
</dbReference>
<dbReference type="SUPFAM" id="SSF116960">
    <property type="entry name" value="YfbU-like"/>
    <property type="match status" value="1"/>
</dbReference>
<gene>
    <name type="ordered locus">VF_1794</name>
</gene>
<evidence type="ECO:0000255" key="1">
    <source>
        <dbReference type="HAMAP-Rule" id="MF_00762"/>
    </source>
</evidence>
<name>Y1794_ALIF1</name>
<comment type="similarity">
    <text evidence="1">Belongs to the UPF0304 family.</text>
</comment>
<protein>
    <recommendedName>
        <fullName evidence="1">UPF0304 protein VF_1794</fullName>
    </recommendedName>
</protein>
<accession>Q5E3V7</accession>
<feature type="chain" id="PRO_1000046767" description="UPF0304 protein VF_1794">
    <location>
        <begin position="1"/>
        <end position="166"/>
    </location>
</feature>
<sequence>MDMTNAQRLILSNQYYLMSQMDPTNAEKYKRQQLIVERGYELQIRELDKDFGCITETECREIIDFMEMYHAMQESYNMLSEECQAKVDARRLQFLGFDIATEAQQVNYVRFLTSSEGLYPQFDKADHHFNSQMPMLDKYRRMLTTWRNCPRQYHLCSTELAQIFNA</sequence>
<organism>
    <name type="scientific">Aliivibrio fischeri (strain ATCC 700601 / ES114)</name>
    <name type="common">Vibrio fischeri</name>
    <dbReference type="NCBI Taxonomy" id="312309"/>
    <lineage>
        <taxon>Bacteria</taxon>
        <taxon>Pseudomonadati</taxon>
        <taxon>Pseudomonadota</taxon>
        <taxon>Gammaproteobacteria</taxon>
        <taxon>Vibrionales</taxon>
        <taxon>Vibrionaceae</taxon>
        <taxon>Aliivibrio</taxon>
    </lineage>
</organism>
<keyword id="KW-1185">Reference proteome</keyword>